<gene>
    <name evidence="1" type="primary">mfnB</name>
    <name type="ordered locus">MA_4436</name>
</gene>
<reference key="1">
    <citation type="journal article" date="2002" name="Genome Res.">
        <title>The genome of Methanosarcina acetivorans reveals extensive metabolic and physiological diversity.</title>
        <authorList>
            <person name="Galagan J.E."/>
            <person name="Nusbaum C."/>
            <person name="Roy A."/>
            <person name="Endrizzi M.G."/>
            <person name="Macdonald P."/>
            <person name="FitzHugh W."/>
            <person name="Calvo S."/>
            <person name="Engels R."/>
            <person name="Smirnov S."/>
            <person name="Atnoor D."/>
            <person name="Brown A."/>
            <person name="Allen N."/>
            <person name="Naylor J."/>
            <person name="Stange-Thomann N."/>
            <person name="DeArellano K."/>
            <person name="Johnson R."/>
            <person name="Linton L."/>
            <person name="McEwan P."/>
            <person name="McKernan K."/>
            <person name="Talamas J."/>
            <person name="Tirrell A."/>
            <person name="Ye W."/>
            <person name="Zimmer A."/>
            <person name="Barber R.D."/>
            <person name="Cann I."/>
            <person name="Graham D.E."/>
            <person name="Grahame D.A."/>
            <person name="Guss A.M."/>
            <person name="Hedderich R."/>
            <person name="Ingram-Smith C."/>
            <person name="Kuettner H.C."/>
            <person name="Krzycki J.A."/>
            <person name="Leigh J.A."/>
            <person name="Li W."/>
            <person name="Liu J."/>
            <person name="Mukhopadhyay B."/>
            <person name="Reeve J.N."/>
            <person name="Smith K."/>
            <person name="Springer T.A."/>
            <person name="Umayam L.A."/>
            <person name="White O."/>
            <person name="White R.H."/>
            <person name="de Macario E.C."/>
            <person name="Ferry J.G."/>
            <person name="Jarrell K.F."/>
            <person name="Jing H."/>
            <person name="Macario A.J.L."/>
            <person name="Paulsen I.T."/>
            <person name="Pritchett M."/>
            <person name="Sowers K.R."/>
            <person name="Swanson R.V."/>
            <person name="Zinder S.H."/>
            <person name="Lander E."/>
            <person name="Metcalf W.W."/>
            <person name="Birren B."/>
        </authorList>
    </citation>
    <scope>NUCLEOTIDE SEQUENCE [LARGE SCALE GENOMIC DNA]</scope>
    <source>
        <strain>ATCC 35395 / DSM 2834 / JCM 12185 / C2A</strain>
    </source>
</reference>
<name>MFNB_METAC</name>
<sequence length="234" mass="25098">MKLLVSPINREEAIIASLGGADIVDVKNPKEGSLGANFPWVIRDVKEVVNGRQPISATIGDFNYKPGTASLAALGAAVAGADYIKVGLYDIQTEAQALELLTKITLAVKDYDPSKKVVASGYSDYKRINSISPLLLPAVAAEAGVDVVMVDTGIKDGKSTFEFMDEQELKEFTDLAHEHGLENAIAGSLKFEDLPVLERIGPDIIGVRGMVCGGDRRTAIRQELVEKLVAECQI</sequence>
<protein>
    <recommendedName>
        <fullName evidence="1">(5-formylfuran-3-yl)methyl phosphate synthase</fullName>
        <ecNumber evidence="1">4.2.3.153</ecNumber>
    </recommendedName>
    <alternativeName>
        <fullName evidence="1">4-(hydroxymethyl)-2-furancarboxaldehyde-phosphate synthase</fullName>
        <shortName evidence="1">4-HFC-P synthase</shortName>
    </alternativeName>
</protein>
<proteinExistence type="inferred from homology"/>
<accession>Q8THS6</accession>
<dbReference type="EC" id="4.2.3.153" evidence="1"/>
<dbReference type="EMBL" id="AE010299">
    <property type="protein sequence ID" value="AAM07777.1"/>
    <property type="molecule type" value="Genomic_DNA"/>
</dbReference>
<dbReference type="RefSeq" id="WP_011024314.1">
    <property type="nucleotide sequence ID" value="NC_003552.1"/>
</dbReference>
<dbReference type="SMR" id="Q8THS6"/>
<dbReference type="FunCoup" id="Q8THS6">
    <property type="interactions" value="94"/>
</dbReference>
<dbReference type="STRING" id="188937.MA_4436"/>
<dbReference type="EnsemblBacteria" id="AAM07777">
    <property type="protein sequence ID" value="AAM07777"/>
    <property type="gene ID" value="MA_4436"/>
</dbReference>
<dbReference type="GeneID" id="1476330"/>
<dbReference type="KEGG" id="mac:MA_4436"/>
<dbReference type="HOGENOM" id="CLU_068659_0_0_2"/>
<dbReference type="InParanoid" id="Q8THS6"/>
<dbReference type="OrthoDB" id="81473at2157"/>
<dbReference type="PhylomeDB" id="Q8THS6"/>
<dbReference type="UniPathway" id="UPA00080"/>
<dbReference type="Proteomes" id="UP000002487">
    <property type="component" value="Chromosome"/>
</dbReference>
<dbReference type="GO" id="GO:0016830">
    <property type="term" value="F:carbon-carbon lyase activity"/>
    <property type="evidence" value="ECO:0007669"/>
    <property type="project" value="UniProtKB-UniRule"/>
</dbReference>
<dbReference type="GO" id="GO:2001120">
    <property type="term" value="P:methanofuran biosynthetic process"/>
    <property type="evidence" value="ECO:0007669"/>
    <property type="project" value="UniProtKB-UniRule"/>
</dbReference>
<dbReference type="HAMAP" id="MF_00681">
    <property type="entry name" value="MfnB"/>
    <property type="match status" value="1"/>
</dbReference>
<dbReference type="InterPro" id="IPR007565">
    <property type="entry name" value="4HFCP_synth"/>
</dbReference>
<dbReference type="InterPro" id="IPR035081">
    <property type="entry name" value="4HFCP_synth_arc"/>
</dbReference>
<dbReference type="InterPro" id="IPR011060">
    <property type="entry name" value="RibuloseP-bd_barrel"/>
</dbReference>
<dbReference type="NCBIfam" id="NF002575">
    <property type="entry name" value="PRK02227.1-3"/>
    <property type="match status" value="1"/>
</dbReference>
<dbReference type="Pfam" id="PF04476">
    <property type="entry name" value="4HFCP_synth"/>
    <property type="match status" value="1"/>
</dbReference>
<dbReference type="PIRSF" id="PIRSF015957">
    <property type="entry name" value="UCP015957"/>
    <property type="match status" value="1"/>
</dbReference>
<dbReference type="SUPFAM" id="SSF51569">
    <property type="entry name" value="Aldolase"/>
    <property type="match status" value="1"/>
</dbReference>
<dbReference type="SUPFAM" id="SSF51366">
    <property type="entry name" value="Ribulose-phoshate binding barrel"/>
    <property type="match status" value="1"/>
</dbReference>
<evidence type="ECO:0000255" key="1">
    <source>
        <dbReference type="HAMAP-Rule" id="MF_00681"/>
    </source>
</evidence>
<keyword id="KW-0456">Lyase</keyword>
<keyword id="KW-1185">Reference proteome</keyword>
<keyword id="KW-0704">Schiff base</keyword>
<feature type="chain" id="PRO_0000134864" description="(5-formylfuran-3-yl)methyl phosphate synthase">
    <location>
        <begin position="1"/>
        <end position="234"/>
    </location>
</feature>
<feature type="active site" description="Schiff-base intermediate with substrate" evidence="1">
    <location>
        <position position="27"/>
    </location>
</feature>
<feature type="active site" description="Proton acceptor" evidence="1">
    <location>
        <position position="85"/>
    </location>
</feature>
<comment type="function">
    <text evidence="1">Catalyzes the formation of 4-(hydroxymethyl)-2-furancarboxaldehyde phosphate (4-HFC-P) from two molecules of glyceraldehyde-3-P (GA-3-P).</text>
</comment>
<comment type="catalytic activity">
    <reaction evidence="1">
        <text>2 D-glyceraldehyde 3-phosphate = 4-(hydroxymethyl)-2-furancarboxaldehyde phosphate + phosphate + 2 H2O</text>
        <dbReference type="Rhea" id="RHEA:43536"/>
        <dbReference type="ChEBI" id="CHEBI:15377"/>
        <dbReference type="ChEBI" id="CHEBI:43474"/>
        <dbReference type="ChEBI" id="CHEBI:59776"/>
        <dbReference type="ChEBI" id="CHEBI:83407"/>
        <dbReference type="EC" id="4.2.3.153"/>
    </reaction>
</comment>
<comment type="pathway">
    <text evidence="1">Cofactor biosynthesis; methanofuran biosynthesis.</text>
</comment>
<comment type="similarity">
    <text evidence="1">Belongs to the MfnB family.</text>
</comment>
<organism>
    <name type="scientific">Methanosarcina acetivorans (strain ATCC 35395 / DSM 2834 / JCM 12185 / C2A)</name>
    <dbReference type="NCBI Taxonomy" id="188937"/>
    <lineage>
        <taxon>Archaea</taxon>
        <taxon>Methanobacteriati</taxon>
        <taxon>Methanobacteriota</taxon>
        <taxon>Stenosarchaea group</taxon>
        <taxon>Methanomicrobia</taxon>
        <taxon>Methanosarcinales</taxon>
        <taxon>Methanosarcinaceae</taxon>
        <taxon>Methanosarcina</taxon>
    </lineage>
</organism>